<evidence type="ECO:0000250" key="1"/>
<evidence type="ECO:0000250" key="2">
    <source>
        <dbReference type="UniProtKB" id="Q91WE6"/>
    </source>
</evidence>
<evidence type="ECO:0000255" key="3"/>
<evidence type="ECO:0000255" key="4">
    <source>
        <dbReference type="PROSITE-ProRule" id="PRU00208"/>
    </source>
</evidence>
<evidence type="ECO:0000255" key="5">
    <source>
        <dbReference type="PROSITE-ProRule" id="PRU00780"/>
    </source>
</evidence>
<evidence type="ECO:0000255" key="6">
    <source>
        <dbReference type="PROSITE-ProRule" id="PRU01266"/>
    </source>
</evidence>
<evidence type="ECO:0000305" key="7"/>
<protein>
    <recommendedName>
        <fullName>Threonylcarbamoyladenosine tRNA methylthiotransferase</fullName>
        <ecNumber evidence="2">2.8.4.5</ecNumber>
    </recommendedName>
    <alternativeName>
        <fullName>CDKAL1-like protein</fullName>
    </alternativeName>
    <alternativeName>
        <fullName>tRNA-t(6)A37 methylthiotransferase</fullName>
    </alternativeName>
</protein>
<name>CDKAL_CAEEL</name>
<sequence>MAGCVSQAAPSEPWLQNVSIVGVKQIDRIVEVVGETLKGNKVRLLTRNRPDAVLSLPKMRKNELIEVLSISTGCLNNCTYCKTKMARGDLVSYPLADLVEQARAAFHDEGVKELWLTSEDLGAWGRDIGLVLPDLLRELVKVIPDGSMMRLGMTNPPYILDHLEEIAEILNHPKVYAFLHIPVQSASDAVLNDMKREYSRRHFEQIADYMIANVPNIYIATDMILAFPTETLEDFEESMELVRKYKFPSLFINQYYPRSGTPAARLKKIDTVEARKRTAAMSELFRSYTRYTDERIGELHRVLVTEVAADKLHGVGHNKSYEQILVPLEYCKMGEWIEVRVTAVTKFSMISKPASIQEDQQPLSLMHLFPLAVFCLVLITLYSVDRFLYPGFFEEWLPFLADAHHDEQQAEMWEHHDNSDPVFYE</sequence>
<accession>Q8MXQ7</accession>
<keyword id="KW-0004">4Fe-4S</keyword>
<keyword id="KW-0408">Iron</keyword>
<keyword id="KW-0411">Iron-sulfur</keyword>
<keyword id="KW-0472">Membrane</keyword>
<keyword id="KW-0479">Metal-binding</keyword>
<keyword id="KW-1185">Reference proteome</keyword>
<keyword id="KW-0949">S-adenosyl-L-methionine</keyword>
<keyword id="KW-0808">Transferase</keyword>
<keyword id="KW-0812">Transmembrane</keyword>
<keyword id="KW-1133">Transmembrane helix</keyword>
<keyword id="KW-0819">tRNA processing</keyword>
<dbReference type="EC" id="2.8.4.5" evidence="2"/>
<dbReference type="EMBL" id="FO081632">
    <property type="protein sequence ID" value="CCD72949.1"/>
    <property type="molecule type" value="Genomic_DNA"/>
</dbReference>
<dbReference type="RefSeq" id="NP_740783.2">
    <property type="nucleotide sequence ID" value="NM_170800.4"/>
</dbReference>
<dbReference type="SMR" id="Q8MXQ7"/>
<dbReference type="FunCoup" id="Q8MXQ7">
    <property type="interactions" value="2754"/>
</dbReference>
<dbReference type="STRING" id="6239.Y92H12BL.1a.2"/>
<dbReference type="PaxDb" id="6239-Y92H12BL.1"/>
<dbReference type="PeptideAtlas" id="Q8MXQ7"/>
<dbReference type="EnsemblMetazoa" id="Y92H12BL.1a.1">
    <property type="protein sequence ID" value="Y92H12BL.1a.1"/>
    <property type="gene ID" value="WBGene00022363"/>
</dbReference>
<dbReference type="GeneID" id="190786"/>
<dbReference type="KEGG" id="cel:CELE_Y92H12BL.1"/>
<dbReference type="UCSC" id="Y92H12BL.1">
    <property type="organism name" value="c. elegans"/>
</dbReference>
<dbReference type="AGR" id="WB:WBGene00022363"/>
<dbReference type="CTD" id="190786"/>
<dbReference type="WormBase" id="Y92H12BL.1a">
    <property type="protein sequence ID" value="CE36347"/>
    <property type="gene ID" value="WBGene00022363"/>
</dbReference>
<dbReference type="eggNOG" id="KOG4355">
    <property type="taxonomic scope" value="Eukaryota"/>
</dbReference>
<dbReference type="HOGENOM" id="CLU_018697_4_2_1"/>
<dbReference type="InParanoid" id="Q8MXQ7"/>
<dbReference type="OMA" id="GCRTNLF"/>
<dbReference type="OrthoDB" id="1730074at2759"/>
<dbReference type="PhylomeDB" id="Q8MXQ7"/>
<dbReference type="PRO" id="PR:Q8MXQ7"/>
<dbReference type="Proteomes" id="UP000001940">
    <property type="component" value="Chromosome I"/>
</dbReference>
<dbReference type="Bgee" id="WBGene00022363">
    <property type="expression patterns" value="Expressed in larva and 3 other cell types or tissues"/>
</dbReference>
<dbReference type="ExpressionAtlas" id="Q8MXQ7">
    <property type="expression patterns" value="baseline"/>
</dbReference>
<dbReference type="GO" id="GO:0005783">
    <property type="term" value="C:endoplasmic reticulum"/>
    <property type="evidence" value="ECO:0000318"/>
    <property type="project" value="GO_Central"/>
</dbReference>
<dbReference type="GO" id="GO:0016020">
    <property type="term" value="C:membrane"/>
    <property type="evidence" value="ECO:0007669"/>
    <property type="project" value="UniProtKB-SubCell"/>
</dbReference>
<dbReference type="GO" id="GO:0051539">
    <property type="term" value="F:4 iron, 4 sulfur cluster binding"/>
    <property type="evidence" value="ECO:0007669"/>
    <property type="project" value="UniProtKB-KW"/>
</dbReference>
<dbReference type="GO" id="GO:0046872">
    <property type="term" value="F:metal ion binding"/>
    <property type="evidence" value="ECO:0007669"/>
    <property type="project" value="UniProtKB-KW"/>
</dbReference>
<dbReference type="GO" id="GO:0035598">
    <property type="term" value="F:N6-threonylcarbomyladenosine methylthiotransferase activity"/>
    <property type="evidence" value="ECO:0000318"/>
    <property type="project" value="GO_Central"/>
</dbReference>
<dbReference type="GO" id="GO:0061712">
    <property type="term" value="F:tRNA (N(6)-L-threonylcarbamoyladenosine(37)-C(2))-methylthiotransferase"/>
    <property type="evidence" value="ECO:0007669"/>
    <property type="project" value="UniProtKB-EC"/>
</dbReference>
<dbReference type="GO" id="GO:0035600">
    <property type="term" value="P:tRNA methylthiolation"/>
    <property type="evidence" value="ECO:0000318"/>
    <property type="project" value="GO_Central"/>
</dbReference>
<dbReference type="CDD" id="cd01335">
    <property type="entry name" value="Radical_SAM"/>
    <property type="match status" value="1"/>
</dbReference>
<dbReference type="FunFam" id="3.80.30.20:FF:000002">
    <property type="entry name" value="threonylcarbamoyladenosine tRNA methylthiotransferase isoform X2"/>
    <property type="match status" value="1"/>
</dbReference>
<dbReference type="Gene3D" id="3.80.30.20">
    <property type="entry name" value="tm_1862 like domain"/>
    <property type="match status" value="1"/>
</dbReference>
<dbReference type="InterPro" id="IPR006638">
    <property type="entry name" value="Elp3/MiaA/NifB-like_rSAM"/>
</dbReference>
<dbReference type="InterPro" id="IPR020612">
    <property type="entry name" value="Methylthiotransferase_CS"/>
</dbReference>
<dbReference type="InterPro" id="IPR006466">
    <property type="entry name" value="MiaB-like_arc_euk"/>
</dbReference>
<dbReference type="InterPro" id="IPR007197">
    <property type="entry name" value="rSAM"/>
</dbReference>
<dbReference type="InterPro" id="IPR023404">
    <property type="entry name" value="rSAM_horseshoe"/>
</dbReference>
<dbReference type="InterPro" id="IPR002792">
    <property type="entry name" value="TRAM_dom"/>
</dbReference>
<dbReference type="NCBIfam" id="TIGR01578">
    <property type="entry name" value="MiaB-like-B"/>
    <property type="match status" value="1"/>
</dbReference>
<dbReference type="PANTHER" id="PTHR11918">
    <property type="entry name" value="RADICAL SAM PROTEINS"/>
    <property type="match status" value="1"/>
</dbReference>
<dbReference type="PANTHER" id="PTHR11918:SF45">
    <property type="entry name" value="THREONYLCARBAMOYLADENOSINE TRNA METHYLTHIOTRANSFERASE"/>
    <property type="match status" value="1"/>
</dbReference>
<dbReference type="Pfam" id="PF04055">
    <property type="entry name" value="Radical_SAM"/>
    <property type="match status" value="1"/>
</dbReference>
<dbReference type="SFLD" id="SFLDG01082">
    <property type="entry name" value="B12-binding_domain_containing"/>
    <property type="match status" value="1"/>
</dbReference>
<dbReference type="SFLD" id="SFLDS00029">
    <property type="entry name" value="Radical_SAM"/>
    <property type="match status" value="1"/>
</dbReference>
<dbReference type="SMART" id="SM00729">
    <property type="entry name" value="Elp3"/>
    <property type="match status" value="1"/>
</dbReference>
<dbReference type="SUPFAM" id="SSF102114">
    <property type="entry name" value="Radical SAM enzymes"/>
    <property type="match status" value="1"/>
</dbReference>
<dbReference type="PROSITE" id="PS01278">
    <property type="entry name" value="MTTASE_RADICAL"/>
    <property type="match status" value="1"/>
</dbReference>
<dbReference type="PROSITE" id="PS51918">
    <property type="entry name" value="RADICAL_SAM"/>
    <property type="match status" value="1"/>
</dbReference>
<dbReference type="PROSITE" id="PS50926">
    <property type="entry name" value="TRAM"/>
    <property type="match status" value="1"/>
</dbReference>
<proteinExistence type="inferred from homology"/>
<comment type="function">
    <text evidence="2">Catalyzes the methylthiolation of N6-threonylcarbamoyladenosine (t(6)A), leading to the formation of 2-methylthio-N6-threonylcarbamoyladenosine (ms(2)t(6)A) at position 37 in tRNAs that read codons beginning with adenine.</text>
</comment>
<comment type="catalytic activity">
    <reaction evidence="2">
        <text>N(6)-L-threonylcarbamoyladenosine(37) in tRNA + (sulfur carrier)-SH + AH2 + 2 S-adenosyl-L-methionine = 2-methylsulfanyl-N(6)-L-threonylcarbamoyladenosine(37) in tRNA + (sulfur carrier)-H + 5'-deoxyadenosine + L-methionine + A + S-adenosyl-L-homocysteine + 2 H(+)</text>
        <dbReference type="Rhea" id="RHEA:37075"/>
        <dbReference type="Rhea" id="RHEA-COMP:10163"/>
        <dbReference type="Rhea" id="RHEA-COMP:11092"/>
        <dbReference type="Rhea" id="RHEA-COMP:14737"/>
        <dbReference type="Rhea" id="RHEA-COMP:14739"/>
        <dbReference type="ChEBI" id="CHEBI:13193"/>
        <dbReference type="ChEBI" id="CHEBI:15378"/>
        <dbReference type="ChEBI" id="CHEBI:17319"/>
        <dbReference type="ChEBI" id="CHEBI:17499"/>
        <dbReference type="ChEBI" id="CHEBI:29917"/>
        <dbReference type="ChEBI" id="CHEBI:57844"/>
        <dbReference type="ChEBI" id="CHEBI:57856"/>
        <dbReference type="ChEBI" id="CHEBI:59789"/>
        <dbReference type="ChEBI" id="CHEBI:64428"/>
        <dbReference type="ChEBI" id="CHEBI:74418"/>
        <dbReference type="ChEBI" id="CHEBI:74420"/>
        <dbReference type="EC" id="2.8.4.5"/>
    </reaction>
</comment>
<comment type="cofactor">
    <cofactor evidence="1">
        <name>[4Fe-4S] cluster</name>
        <dbReference type="ChEBI" id="CHEBI:49883"/>
    </cofactor>
    <text evidence="1">Binds 1 [4Fe-4S] cluster. The cluster is coordinated with 3 cysteines and an exchangeable S-adenosyl-L-methionine.</text>
</comment>
<comment type="subcellular location">
    <subcellularLocation>
        <location evidence="3">Membrane</location>
        <topology evidence="3">Single-pass membrane protein</topology>
    </subcellularLocation>
</comment>
<comment type="similarity">
    <text evidence="7">Belongs to the methylthiotransferase family. CDKAL1 subfamily.</text>
</comment>
<gene>
    <name type="ORF">Y92H12BL.1</name>
</gene>
<organism>
    <name type="scientific">Caenorhabditis elegans</name>
    <dbReference type="NCBI Taxonomy" id="6239"/>
    <lineage>
        <taxon>Eukaryota</taxon>
        <taxon>Metazoa</taxon>
        <taxon>Ecdysozoa</taxon>
        <taxon>Nematoda</taxon>
        <taxon>Chromadorea</taxon>
        <taxon>Rhabditida</taxon>
        <taxon>Rhabditina</taxon>
        <taxon>Rhabditomorpha</taxon>
        <taxon>Rhabditoidea</taxon>
        <taxon>Rhabditidae</taxon>
        <taxon>Peloderinae</taxon>
        <taxon>Caenorhabditis</taxon>
    </lineage>
</organism>
<feature type="chain" id="PRO_0000298675" description="Threonylcarbamoyladenosine tRNA methylthiotransferase">
    <location>
        <begin position="1"/>
        <end position="425"/>
    </location>
</feature>
<feature type="transmembrane region" description="Helical" evidence="3">
    <location>
        <begin position="362"/>
        <end position="382"/>
    </location>
</feature>
<feature type="domain" description="Radical SAM core" evidence="6">
    <location>
        <begin position="60"/>
        <end position="295"/>
    </location>
</feature>
<feature type="domain" description="TRAM" evidence="4">
    <location>
        <begin position="293"/>
        <end position="355"/>
    </location>
</feature>
<feature type="binding site" evidence="5">
    <location>
        <position position="74"/>
    </location>
    <ligand>
        <name>[4Fe-4S] cluster</name>
        <dbReference type="ChEBI" id="CHEBI:49883"/>
        <note>4Fe-4S-S-AdoMet</note>
    </ligand>
</feature>
<feature type="binding site" evidence="5">
    <location>
        <position position="78"/>
    </location>
    <ligand>
        <name>[4Fe-4S] cluster</name>
        <dbReference type="ChEBI" id="CHEBI:49883"/>
        <note>4Fe-4S-S-AdoMet</note>
    </ligand>
</feature>
<feature type="binding site" evidence="5">
    <location>
        <position position="81"/>
    </location>
    <ligand>
        <name>[4Fe-4S] cluster</name>
        <dbReference type="ChEBI" id="CHEBI:49883"/>
        <note>4Fe-4S-S-AdoMet</note>
    </ligand>
</feature>
<reference key="1">
    <citation type="journal article" date="1998" name="Science">
        <title>Genome sequence of the nematode C. elegans: a platform for investigating biology.</title>
        <authorList>
            <consortium name="The C. elegans sequencing consortium"/>
        </authorList>
    </citation>
    <scope>NUCLEOTIDE SEQUENCE [LARGE SCALE GENOMIC DNA]</scope>
    <source>
        <strain>Bristol N2</strain>
    </source>
</reference>